<sequence>MANHKSALKRVRQTKKRTERNRFYRTRMKNIIKDVKEAVASGNKAAAIEALKVANKRIHEYVSKGIIKKNNAARKVSKLHKLVNSMNEAA</sequence>
<comment type="function">
    <text evidence="1">Binds directly to 16S ribosomal RNA.</text>
</comment>
<comment type="similarity">
    <text evidence="1">Belongs to the bacterial ribosomal protein bS20 family.</text>
</comment>
<reference key="1">
    <citation type="journal article" date="2007" name="Proc. Natl. Acad. Sci. U.S.A.">
        <title>Deep-sea vent epsilon-proteobacterial genomes provide insights into emergence of pathogens.</title>
        <authorList>
            <person name="Nakagawa S."/>
            <person name="Takaki Y."/>
            <person name="Shimamura S."/>
            <person name="Reysenbach A.-L."/>
            <person name="Takai K."/>
            <person name="Horikoshi K."/>
        </authorList>
    </citation>
    <scope>NUCLEOTIDE SEQUENCE [LARGE SCALE GENOMIC DNA]</scope>
    <source>
        <strain>SB155-2</strain>
    </source>
</reference>
<name>RS20_NITSB</name>
<feature type="chain" id="PRO_1000014615" description="Small ribosomal subunit protein bS20">
    <location>
        <begin position="1"/>
        <end position="90"/>
    </location>
</feature>
<feature type="region of interest" description="Disordered" evidence="2">
    <location>
        <begin position="1"/>
        <end position="21"/>
    </location>
</feature>
<dbReference type="EMBL" id="AP009178">
    <property type="protein sequence ID" value="BAF69222.1"/>
    <property type="molecule type" value="Genomic_DNA"/>
</dbReference>
<dbReference type="RefSeq" id="WP_011979648.1">
    <property type="nucleotide sequence ID" value="NC_009662.1"/>
</dbReference>
<dbReference type="SMR" id="A6Q163"/>
<dbReference type="FunCoup" id="A6Q163">
    <property type="interactions" value="442"/>
</dbReference>
<dbReference type="STRING" id="387092.NIS_0105"/>
<dbReference type="KEGG" id="nis:NIS_0105"/>
<dbReference type="eggNOG" id="COG0268">
    <property type="taxonomic scope" value="Bacteria"/>
</dbReference>
<dbReference type="HOGENOM" id="CLU_160655_3_0_7"/>
<dbReference type="InParanoid" id="A6Q163"/>
<dbReference type="OrthoDB" id="9807974at2"/>
<dbReference type="Proteomes" id="UP000001118">
    <property type="component" value="Chromosome"/>
</dbReference>
<dbReference type="GO" id="GO:0005829">
    <property type="term" value="C:cytosol"/>
    <property type="evidence" value="ECO:0007669"/>
    <property type="project" value="TreeGrafter"/>
</dbReference>
<dbReference type="GO" id="GO:0015935">
    <property type="term" value="C:small ribosomal subunit"/>
    <property type="evidence" value="ECO:0007669"/>
    <property type="project" value="TreeGrafter"/>
</dbReference>
<dbReference type="GO" id="GO:0070181">
    <property type="term" value="F:small ribosomal subunit rRNA binding"/>
    <property type="evidence" value="ECO:0007669"/>
    <property type="project" value="TreeGrafter"/>
</dbReference>
<dbReference type="GO" id="GO:0003735">
    <property type="term" value="F:structural constituent of ribosome"/>
    <property type="evidence" value="ECO:0007669"/>
    <property type="project" value="InterPro"/>
</dbReference>
<dbReference type="GO" id="GO:0006412">
    <property type="term" value="P:translation"/>
    <property type="evidence" value="ECO:0007669"/>
    <property type="project" value="UniProtKB-UniRule"/>
</dbReference>
<dbReference type="FunFam" id="1.20.58.110:FF:000001">
    <property type="entry name" value="30S ribosomal protein S20"/>
    <property type="match status" value="1"/>
</dbReference>
<dbReference type="Gene3D" id="1.20.58.110">
    <property type="entry name" value="Ribosomal protein S20"/>
    <property type="match status" value="1"/>
</dbReference>
<dbReference type="HAMAP" id="MF_00500">
    <property type="entry name" value="Ribosomal_bS20"/>
    <property type="match status" value="1"/>
</dbReference>
<dbReference type="InterPro" id="IPR002583">
    <property type="entry name" value="Ribosomal_bS20"/>
</dbReference>
<dbReference type="InterPro" id="IPR036510">
    <property type="entry name" value="Ribosomal_bS20_sf"/>
</dbReference>
<dbReference type="NCBIfam" id="TIGR00029">
    <property type="entry name" value="S20"/>
    <property type="match status" value="1"/>
</dbReference>
<dbReference type="PANTHER" id="PTHR33398">
    <property type="entry name" value="30S RIBOSOMAL PROTEIN S20"/>
    <property type="match status" value="1"/>
</dbReference>
<dbReference type="PANTHER" id="PTHR33398:SF1">
    <property type="entry name" value="SMALL RIBOSOMAL SUBUNIT PROTEIN BS20C"/>
    <property type="match status" value="1"/>
</dbReference>
<dbReference type="Pfam" id="PF01649">
    <property type="entry name" value="Ribosomal_S20p"/>
    <property type="match status" value="1"/>
</dbReference>
<dbReference type="SUPFAM" id="SSF46992">
    <property type="entry name" value="Ribosomal protein S20"/>
    <property type="match status" value="1"/>
</dbReference>
<proteinExistence type="inferred from homology"/>
<keyword id="KW-1185">Reference proteome</keyword>
<keyword id="KW-0687">Ribonucleoprotein</keyword>
<keyword id="KW-0689">Ribosomal protein</keyword>
<keyword id="KW-0694">RNA-binding</keyword>
<keyword id="KW-0699">rRNA-binding</keyword>
<organism>
    <name type="scientific">Nitratiruptor sp. (strain SB155-2)</name>
    <dbReference type="NCBI Taxonomy" id="387092"/>
    <lineage>
        <taxon>Bacteria</taxon>
        <taxon>Pseudomonadati</taxon>
        <taxon>Campylobacterota</taxon>
        <taxon>Epsilonproteobacteria</taxon>
        <taxon>Nautiliales</taxon>
        <taxon>Nitratiruptoraceae</taxon>
        <taxon>Nitratiruptor</taxon>
    </lineage>
</organism>
<evidence type="ECO:0000255" key="1">
    <source>
        <dbReference type="HAMAP-Rule" id="MF_00500"/>
    </source>
</evidence>
<evidence type="ECO:0000256" key="2">
    <source>
        <dbReference type="SAM" id="MobiDB-lite"/>
    </source>
</evidence>
<evidence type="ECO:0000305" key="3"/>
<accession>A6Q163</accession>
<gene>
    <name evidence="1" type="primary">rpsT</name>
    <name type="ordered locus">NIS_0105</name>
</gene>
<protein>
    <recommendedName>
        <fullName evidence="1">Small ribosomal subunit protein bS20</fullName>
    </recommendedName>
    <alternativeName>
        <fullName evidence="3">30S ribosomal protein S20</fullName>
    </alternativeName>
</protein>